<protein>
    <recommendedName>
        <fullName>Thrombomodulin</fullName>
        <shortName>TM</shortName>
    </recommendedName>
    <alternativeName>
        <fullName>Fetomodulin</fullName>
    </alternativeName>
    <cdAntigenName>CD141</cdAntigenName>
</protein>
<reference key="1">
    <citation type="journal article" date="1986" name="Proc. Natl. Acad. Sci. U.S.A.">
        <title>Characterization of a thrombomodulin cDNA reveals structural similarity to the low density lipoprotein receptor.</title>
        <authorList>
            <person name="Jackman R.W."/>
            <person name="Beeler D.L."/>
            <person name="Vandewater L."/>
            <person name="Rosenberg R.D."/>
        </authorList>
    </citation>
    <scope>NUCLEOTIDE SEQUENCE [MRNA]</scope>
</reference>
<proteinExistence type="evidence at transcript level"/>
<evidence type="ECO:0000250" key="1">
    <source>
        <dbReference type="UniProtKB" id="P07204"/>
    </source>
</evidence>
<evidence type="ECO:0000250" key="2">
    <source>
        <dbReference type="UniProtKB" id="P15306"/>
    </source>
</evidence>
<evidence type="ECO:0000255" key="3"/>
<evidence type="ECO:0000255" key="4">
    <source>
        <dbReference type="PROSITE-ProRule" id="PRU00076"/>
    </source>
</evidence>
<evidence type="ECO:0000256" key="5">
    <source>
        <dbReference type="SAM" id="MobiDB-lite"/>
    </source>
</evidence>
<sequence length="356" mass="37795">RGARGETEGRWSREAPGAWACGVERGGCQHECKGSAGASNCLCPADAALQADGRSCGLPAEHPCHQLCEHFCHLHGLGNYTCICEAGYQLAADQHRCEDVDDCAQLPSPCPQRCVNTEGGFQCHCDTGYELVDGECVDPVDPCFDNNCEYQCQPVGRSEHKCICAEGFAPVPGAPHKCQMFCNQTSCPADCDPHYPTICRCPEGYIIDEGSTCTDINECDTNICPGQCHNLPGTYECICGPDSALSGQIGIDCDPTQVNEERGTPEDYGGSGEPPVSPTPGATARPSPAPAGPLHSGVLVGISIASLSLVVALLALLCHLRKKQGASRGELEYKCGVPAKELMLQQVKTERTPQKL</sequence>
<keyword id="KW-0094">Blood coagulation</keyword>
<keyword id="KW-1015">Disulfide bond</keyword>
<keyword id="KW-0245">EGF-like domain</keyword>
<keyword id="KW-0325">Glycoprotein</keyword>
<keyword id="KW-0356">Hemostasis</keyword>
<keyword id="KW-0472">Membrane</keyword>
<keyword id="KW-0654">Proteoglycan</keyword>
<keyword id="KW-0675">Receptor</keyword>
<keyword id="KW-1185">Reference proteome</keyword>
<keyword id="KW-0677">Repeat</keyword>
<keyword id="KW-0812">Transmembrane</keyword>
<keyword id="KW-1133">Transmembrane helix</keyword>
<accession>P06579</accession>
<feature type="chain" id="PRO_0000055636" description="Thrombomodulin">
    <location>
        <begin position="1" status="less than"/>
        <end position="356"/>
    </location>
</feature>
<feature type="topological domain" description="Extracellular" evidence="3">
    <location>
        <begin position="1"/>
        <end position="296"/>
    </location>
</feature>
<feature type="transmembrane region" description="Helical" evidence="3">
    <location>
        <begin position="297"/>
        <end position="320"/>
    </location>
</feature>
<feature type="topological domain" description="Cytoplasmic" evidence="3">
    <location>
        <begin position="321"/>
        <end position="356"/>
    </location>
</feature>
<feature type="domain" description="EGF-like 1" evidence="4">
    <location>
        <begin position="17"/>
        <end position="57"/>
    </location>
</feature>
<feature type="domain" description="EGF-like 2" evidence="4">
    <location>
        <begin position="60"/>
        <end position="98"/>
    </location>
</feature>
<feature type="domain" description="EGF-like 3; calcium-binding" evidence="4">
    <location>
        <begin position="99"/>
        <end position="137"/>
    </location>
</feature>
<feature type="domain" description="EGF-like 4" evidence="4">
    <location>
        <begin position="139"/>
        <end position="179"/>
    </location>
</feature>
<feature type="domain" description="EGF-like 5" evidence="4">
    <location>
        <begin position="178"/>
        <end position="214"/>
    </location>
</feature>
<feature type="domain" description="EGF-like 6; calcium-binding" evidence="4">
    <location>
        <begin position="215"/>
        <end position="254"/>
    </location>
</feature>
<feature type="region of interest" description="Disordered" evidence="5">
    <location>
        <begin position="255"/>
        <end position="290"/>
    </location>
</feature>
<feature type="glycosylation site" description="O-linked (Xyl...) (chondroitin sulfate) serine" evidence="1">
    <location>
        <position position="271"/>
    </location>
</feature>
<feature type="disulfide bond" evidence="4">
    <location>
        <begin position="21"/>
        <end position="32"/>
    </location>
</feature>
<feature type="disulfide bond" evidence="4">
    <location>
        <begin position="28"/>
        <end position="41"/>
    </location>
</feature>
<feature type="disulfide bond" evidence="4">
    <location>
        <begin position="43"/>
        <end position="56"/>
    </location>
</feature>
<feature type="disulfide bond" evidence="4">
    <location>
        <begin position="64"/>
        <end position="72"/>
    </location>
</feature>
<feature type="disulfide bond" evidence="4">
    <location>
        <begin position="68"/>
        <end position="82"/>
    </location>
</feature>
<feature type="disulfide bond" evidence="4">
    <location>
        <begin position="84"/>
        <end position="97"/>
    </location>
</feature>
<feature type="disulfide bond" evidence="4">
    <location>
        <begin position="103"/>
        <end position="114"/>
    </location>
</feature>
<feature type="disulfide bond" evidence="4">
    <location>
        <begin position="110"/>
        <end position="123"/>
    </location>
</feature>
<feature type="disulfide bond" evidence="4">
    <location>
        <begin position="125"/>
        <end position="136"/>
    </location>
</feature>
<feature type="disulfide bond" evidence="4">
    <location>
        <begin position="143"/>
        <end position="152"/>
    </location>
</feature>
<feature type="disulfide bond" evidence="4">
    <location>
        <begin position="148"/>
        <end position="162"/>
    </location>
</feature>
<feature type="disulfide bond" evidence="4">
    <location>
        <begin position="164"/>
        <end position="178"/>
    </location>
</feature>
<feature type="disulfide bond" evidence="4">
    <location>
        <begin position="182"/>
        <end position="191"/>
    </location>
</feature>
<feature type="disulfide bond" evidence="4">
    <location>
        <begin position="187"/>
        <end position="199"/>
    </location>
</feature>
<feature type="disulfide bond" evidence="4">
    <location>
        <begin position="201"/>
        <end position="213"/>
    </location>
</feature>
<feature type="disulfide bond" evidence="4">
    <location>
        <begin position="219"/>
        <end position="228"/>
    </location>
</feature>
<feature type="disulfide bond" evidence="4">
    <location>
        <begin position="224"/>
        <end position="237"/>
    </location>
</feature>
<feature type="disulfide bond" evidence="4">
    <location>
        <begin position="239"/>
        <end position="253"/>
    </location>
</feature>
<feature type="non-terminal residue">
    <location>
        <position position="1"/>
    </location>
</feature>
<comment type="function">
    <text evidence="1 2">Endothelial cell receptor that plays a critical role in regulating several physiological processes including hemostasis, coagulation, fibrinolysis, inflammation, and angiogenesis. Acts as a cofactor for thrombin activation of protein C/PROC on the surface of vascular endothelial cells leading to initiation of the activated protein C anticoagulant pathway. Also accelerates the activation of the plasma carboxypeptidase B2/CPB2, which catalyzes removal of C-terminal basic amino acids from its substrates including kinins or anaphylatoxins leading to fibrinolysis inhibition (By similarity). Plays critical protective roles in changing the cleavage specificity of protease-activated receptor 1/PAR1, inhibiting endothelial cell permeability and inflammation (By similarity). Suppresses inflammation distinctly from its anticoagulant cofactor activity by sequestering HMGB1 thereby preventing it from engaging cellular receptors such as RAGE and contributing to the inflammatory response (By similarity).</text>
</comment>
<comment type="subunit">
    <text evidence="1">Interacts with ITGAL, ITGAM and ITGB2. Interacts with thrombin/F2; this interaction switches the specificity of thrombin from a procoagulant to an anticoagulant and antifibrinolytic protease. Interacts with ANGP1 and ANGP2; these interactions significantly inhibit the generation of activated PC and TAFIa/CPB2 by the thrombin/thrombomodulin complex. Interacts with PF4; this interaction enhances generation of activated protein C. Interacts with HMGB1; this interaction inhibits HMGB1 inflammatory activity.</text>
</comment>
<comment type="subcellular location">
    <subcellularLocation>
        <location evidence="1">Membrane</location>
        <topology evidence="1">Single-pass type I membrane protein</topology>
    </subcellularLocation>
</comment>
<comment type="tissue specificity">
    <text>Endothelial cells are unique in synthesizing thrombomodulin.</text>
</comment>
<name>TRBM_BOVIN</name>
<gene>
    <name type="primary">THBD</name>
</gene>
<dbReference type="EMBL" id="M14657">
    <property type="protein sequence ID" value="AAA30785.1"/>
    <property type="molecule type" value="mRNA"/>
</dbReference>
<dbReference type="PIR" id="A25918">
    <property type="entry name" value="A25918"/>
</dbReference>
<dbReference type="SMR" id="P06579"/>
<dbReference type="STRING" id="9913.ENSBTAP00000066029"/>
<dbReference type="GlyCosmos" id="P06579">
    <property type="glycosylation" value="1 site, No reported glycans"/>
</dbReference>
<dbReference type="GlyGen" id="P06579">
    <property type="glycosylation" value="1 site"/>
</dbReference>
<dbReference type="PaxDb" id="9913-ENSBTAP00000052487"/>
<dbReference type="eggNOG" id="ENOG502R1T7">
    <property type="taxonomic scope" value="Eukaryota"/>
</dbReference>
<dbReference type="InParanoid" id="P06579"/>
<dbReference type="OrthoDB" id="4062651at2759"/>
<dbReference type="Proteomes" id="UP000009136">
    <property type="component" value="Unplaced"/>
</dbReference>
<dbReference type="GO" id="GO:0016020">
    <property type="term" value="C:membrane"/>
    <property type="evidence" value="ECO:0007669"/>
    <property type="project" value="UniProtKB-SubCell"/>
</dbReference>
<dbReference type="GO" id="GO:0005509">
    <property type="term" value="F:calcium ion binding"/>
    <property type="evidence" value="ECO:0007669"/>
    <property type="project" value="InterPro"/>
</dbReference>
<dbReference type="GO" id="GO:0004888">
    <property type="term" value="F:transmembrane signaling receptor activity"/>
    <property type="evidence" value="ECO:0007669"/>
    <property type="project" value="InterPro"/>
</dbReference>
<dbReference type="GO" id="GO:0007596">
    <property type="term" value="P:blood coagulation"/>
    <property type="evidence" value="ECO:0007669"/>
    <property type="project" value="UniProtKB-KW"/>
</dbReference>
<dbReference type="CDD" id="cd00054">
    <property type="entry name" value="EGF_CA"/>
    <property type="match status" value="1"/>
</dbReference>
<dbReference type="FunFam" id="2.10.25.10:FF:000406">
    <property type="entry name" value="CD248 molecule"/>
    <property type="match status" value="1"/>
</dbReference>
<dbReference type="FunFam" id="2.10.25.10:FF:000874">
    <property type="entry name" value="Thrombomodulin"/>
    <property type="match status" value="1"/>
</dbReference>
<dbReference type="Gene3D" id="2.10.25.10">
    <property type="entry name" value="Laminin"/>
    <property type="match status" value="6"/>
</dbReference>
<dbReference type="InterPro" id="IPR026823">
    <property type="entry name" value="cEGF"/>
</dbReference>
<dbReference type="InterPro" id="IPR001881">
    <property type="entry name" value="EGF-like_Ca-bd_dom"/>
</dbReference>
<dbReference type="InterPro" id="IPR000742">
    <property type="entry name" value="EGF-like_dom"/>
</dbReference>
<dbReference type="InterPro" id="IPR000152">
    <property type="entry name" value="EGF-type_Asp/Asn_hydroxyl_site"/>
</dbReference>
<dbReference type="InterPro" id="IPR018097">
    <property type="entry name" value="EGF_Ca-bd_CS"/>
</dbReference>
<dbReference type="InterPro" id="IPR009030">
    <property type="entry name" value="Growth_fac_rcpt_cys_sf"/>
</dbReference>
<dbReference type="InterPro" id="IPR049883">
    <property type="entry name" value="NOTCH1_EGF-like"/>
</dbReference>
<dbReference type="InterPro" id="IPR052126">
    <property type="entry name" value="Spindle_Org/Thrombomodulin"/>
</dbReference>
<dbReference type="InterPro" id="IPR015149">
    <property type="entry name" value="Tme5_EGF-like"/>
</dbReference>
<dbReference type="PANTHER" id="PTHR24036">
    <property type="entry name" value="SKELETOR-RELATED"/>
    <property type="match status" value="1"/>
</dbReference>
<dbReference type="PANTHER" id="PTHR24036:SF5">
    <property type="entry name" value="THROMBOMODULIN"/>
    <property type="match status" value="1"/>
</dbReference>
<dbReference type="Pfam" id="PF12662">
    <property type="entry name" value="cEGF"/>
    <property type="match status" value="1"/>
</dbReference>
<dbReference type="Pfam" id="PF07645">
    <property type="entry name" value="EGF_CA"/>
    <property type="match status" value="1"/>
</dbReference>
<dbReference type="Pfam" id="PF09064">
    <property type="entry name" value="EGF_Tme5"/>
    <property type="match status" value="1"/>
</dbReference>
<dbReference type="PRINTS" id="PR00907">
    <property type="entry name" value="THRMBOMODULN"/>
</dbReference>
<dbReference type="SMART" id="SM00181">
    <property type="entry name" value="EGF"/>
    <property type="match status" value="6"/>
</dbReference>
<dbReference type="SMART" id="SM00179">
    <property type="entry name" value="EGF_CA"/>
    <property type="match status" value="4"/>
</dbReference>
<dbReference type="SUPFAM" id="SSF57196">
    <property type="entry name" value="EGF/Laminin"/>
    <property type="match status" value="3"/>
</dbReference>
<dbReference type="SUPFAM" id="SSF57184">
    <property type="entry name" value="Growth factor receptor domain"/>
    <property type="match status" value="1"/>
</dbReference>
<dbReference type="PROSITE" id="PS00010">
    <property type="entry name" value="ASX_HYDROXYL"/>
    <property type="match status" value="2"/>
</dbReference>
<dbReference type="PROSITE" id="PS01186">
    <property type="entry name" value="EGF_2"/>
    <property type="match status" value="3"/>
</dbReference>
<dbReference type="PROSITE" id="PS50026">
    <property type="entry name" value="EGF_3"/>
    <property type="match status" value="3"/>
</dbReference>
<dbReference type="PROSITE" id="PS01187">
    <property type="entry name" value="EGF_CA"/>
    <property type="match status" value="2"/>
</dbReference>
<organism>
    <name type="scientific">Bos taurus</name>
    <name type="common">Bovine</name>
    <dbReference type="NCBI Taxonomy" id="9913"/>
    <lineage>
        <taxon>Eukaryota</taxon>
        <taxon>Metazoa</taxon>
        <taxon>Chordata</taxon>
        <taxon>Craniata</taxon>
        <taxon>Vertebrata</taxon>
        <taxon>Euteleostomi</taxon>
        <taxon>Mammalia</taxon>
        <taxon>Eutheria</taxon>
        <taxon>Laurasiatheria</taxon>
        <taxon>Artiodactyla</taxon>
        <taxon>Ruminantia</taxon>
        <taxon>Pecora</taxon>
        <taxon>Bovidae</taxon>
        <taxon>Bovinae</taxon>
        <taxon>Bos</taxon>
    </lineage>
</organism>